<gene>
    <name type="primary">pgtA</name>
    <name type="ordered locus">STM2396</name>
</gene>
<evidence type="ECO:0000255" key="1"/>
<evidence type="ECO:0000255" key="2">
    <source>
        <dbReference type="PROSITE-ProRule" id="PRU00169"/>
    </source>
</evidence>
<evidence type="ECO:0000255" key="3">
    <source>
        <dbReference type="PROSITE-ProRule" id="PRU00193"/>
    </source>
</evidence>
<evidence type="ECO:0000305" key="4"/>
<keyword id="KW-0010">Activator</keyword>
<keyword id="KW-0067">ATP-binding</keyword>
<keyword id="KW-0963">Cytoplasm</keyword>
<keyword id="KW-0238">DNA-binding</keyword>
<keyword id="KW-0547">Nucleotide-binding</keyword>
<keyword id="KW-0597">Phosphoprotein</keyword>
<keyword id="KW-1185">Reference proteome</keyword>
<keyword id="KW-0804">Transcription</keyword>
<keyword id="KW-0805">Transcription regulation</keyword>
<keyword id="KW-0902">Two-component regulatory system</keyword>
<proteinExistence type="inferred from homology"/>
<name>PGTA_SALTY</name>
<protein>
    <recommendedName>
        <fullName>Phosphoglycerate transport system transcriptional regulatory protein PgtA</fullName>
    </recommendedName>
</protein>
<sequence>MLNDECSILLIDDDVDVLDAYTQMLEQAGYRVRGFTHPFEAKEWVKADWEGIVLSDVCMPGCSGIDLMTLFHQDDDQLPILLITGHGDVPMAVDAVKKGAWDFLQKPVDPGKLLILIEDALRQRRSVIARRQYCQQTLQVELIGRSEWMNQFRQRLQQLAETDIAVWFYGEHGTGRMTGARYLHQLGRNAKGPFVRYELTPENAGQLETFIDQAQGGTLVLSHPEYLTREQQHHLARLQSLEHRPFRLVGVGSASLVEQAAANQIAAELYYCFAMTQIACQSLSQRPDDIEPLFRHYLRKACLRLNHPVPEIAGELLKGIMRRAWPSNVRELANAAELFAVGVLPLAETVNPQLLLQEPTPLDRRVEEYERQIITEALNIHQGRINEVAEYLQIPRKKLYLRMKKYGLSKEHYKF</sequence>
<accession>P06184</accession>
<comment type="function">
    <text>Member of the two-component regulatory system PgtB/PgtA that regulates the inducible phosphoglycerate transport system. When activated by PgtB it acts in conjunction with sigma-54 as a transcriptional activator.</text>
</comment>
<comment type="subcellular location">
    <subcellularLocation>
        <location evidence="4">Cytoplasm</location>
    </subcellularLocation>
</comment>
<comment type="PTM">
    <text evidence="4">Phosphorylated by PgtB.</text>
</comment>
<reference key="1">
    <citation type="journal article" date="1986" name="Gene">
        <title>Identification and nucleotide sequence of the activator gene of the externally induced phosphoglycerate transport system of Salmonella typhimurium.</title>
        <authorList>
            <person name="Yu G.-Q."/>
            <person name="Hong J.-S."/>
        </authorList>
    </citation>
    <scope>NUCLEOTIDE SEQUENCE [GENOMIC DNA]</scope>
</reference>
<reference key="2">
    <citation type="journal article" date="2001" name="Nature">
        <title>Complete genome sequence of Salmonella enterica serovar Typhimurium LT2.</title>
        <authorList>
            <person name="McClelland M."/>
            <person name="Sanderson K.E."/>
            <person name="Spieth J."/>
            <person name="Clifton S.W."/>
            <person name="Latreille P."/>
            <person name="Courtney L."/>
            <person name="Porwollik S."/>
            <person name="Ali J."/>
            <person name="Dante M."/>
            <person name="Du F."/>
            <person name="Hou S."/>
            <person name="Layman D."/>
            <person name="Leonard S."/>
            <person name="Nguyen C."/>
            <person name="Scott K."/>
            <person name="Holmes A."/>
            <person name="Grewal N."/>
            <person name="Mulvaney E."/>
            <person name="Ryan E."/>
            <person name="Sun H."/>
            <person name="Florea L."/>
            <person name="Miller W."/>
            <person name="Stoneking T."/>
            <person name="Nhan M."/>
            <person name="Waterston R."/>
            <person name="Wilson R.K."/>
        </authorList>
    </citation>
    <scope>NUCLEOTIDE SEQUENCE [LARGE SCALE GENOMIC DNA]</scope>
    <source>
        <strain>LT2 / SGSC1412 / ATCC 700720</strain>
    </source>
</reference>
<reference key="3">
    <citation type="journal article" date="1988" name="J. Bacteriol.">
        <title>Identification of the products and nucleotide sequences of two regulatory genes involved in the exogenous induction of phosphoglycerate transport in Salmonella typhimurium.</title>
        <authorList>
            <person name="Yang Y.L."/>
            <person name="Goldrick D."/>
            <person name="Hong J.-S."/>
        </authorList>
    </citation>
    <scope>NUCLEOTIDE SEQUENCE [GENOMIC DNA] OF 1-29</scope>
</reference>
<dbReference type="EMBL" id="M13923">
    <property type="protein sequence ID" value="AAA27184.1"/>
    <property type="molecule type" value="Genomic_DNA"/>
</dbReference>
<dbReference type="EMBL" id="AE006468">
    <property type="protein sequence ID" value="AAL21296.1"/>
    <property type="molecule type" value="Genomic_DNA"/>
</dbReference>
<dbReference type="EMBL" id="M21279">
    <property type="protein sequence ID" value="AAA68216.1"/>
    <property type="molecule type" value="Genomic_DNA"/>
</dbReference>
<dbReference type="PIR" id="A28255">
    <property type="entry name" value="A28255"/>
</dbReference>
<dbReference type="RefSeq" id="NP_461337.1">
    <property type="nucleotide sequence ID" value="NC_003197.2"/>
</dbReference>
<dbReference type="RefSeq" id="WP_000930843.1">
    <property type="nucleotide sequence ID" value="NC_003197.2"/>
</dbReference>
<dbReference type="SMR" id="P06184"/>
<dbReference type="STRING" id="99287.STM2396"/>
<dbReference type="PaxDb" id="99287-STM2396"/>
<dbReference type="GeneID" id="1253918"/>
<dbReference type="KEGG" id="stm:STM2396"/>
<dbReference type="PATRIC" id="fig|99287.12.peg.2534"/>
<dbReference type="HOGENOM" id="CLU_000445_0_5_6"/>
<dbReference type="OMA" id="DIYMPAM"/>
<dbReference type="PhylomeDB" id="P06184"/>
<dbReference type="BioCyc" id="SENT99287:STM2396-MONOMER"/>
<dbReference type="Proteomes" id="UP000001014">
    <property type="component" value="Chromosome"/>
</dbReference>
<dbReference type="GO" id="GO:0005737">
    <property type="term" value="C:cytoplasm"/>
    <property type="evidence" value="ECO:0007669"/>
    <property type="project" value="UniProtKB-SubCell"/>
</dbReference>
<dbReference type="GO" id="GO:0032993">
    <property type="term" value="C:protein-DNA complex"/>
    <property type="evidence" value="ECO:0000318"/>
    <property type="project" value="GO_Central"/>
</dbReference>
<dbReference type="GO" id="GO:0005524">
    <property type="term" value="F:ATP binding"/>
    <property type="evidence" value="ECO:0007669"/>
    <property type="project" value="UniProtKB-KW"/>
</dbReference>
<dbReference type="GO" id="GO:0000987">
    <property type="term" value="F:cis-regulatory region sequence-specific DNA binding"/>
    <property type="evidence" value="ECO:0000318"/>
    <property type="project" value="GO_Central"/>
</dbReference>
<dbReference type="GO" id="GO:0001216">
    <property type="term" value="F:DNA-binding transcription activator activity"/>
    <property type="evidence" value="ECO:0000318"/>
    <property type="project" value="GO_Central"/>
</dbReference>
<dbReference type="GO" id="GO:0000160">
    <property type="term" value="P:phosphorelay signal transduction system"/>
    <property type="evidence" value="ECO:0007669"/>
    <property type="project" value="UniProtKB-KW"/>
</dbReference>
<dbReference type="GO" id="GO:0045893">
    <property type="term" value="P:positive regulation of DNA-templated transcription"/>
    <property type="evidence" value="ECO:0000318"/>
    <property type="project" value="GO_Central"/>
</dbReference>
<dbReference type="FunFam" id="3.40.50.2300:FF:000018">
    <property type="entry name" value="DNA-binding transcriptional regulator NtrC"/>
    <property type="match status" value="1"/>
</dbReference>
<dbReference type="Gene3D" id="1.10.8.60">
    <property type="match status" value="1"/>
</dbReference>
<dbReference type="Gene3D" id="3.40.50.2300">
    <property type="match status" value="1"/>
</dbReference>
<dbReference type="Gene3D" id="1.10.10.60">
    <property type="entry name" value="Homeodomain-like"/>
    <property type="match status" value="1"/>
</dbReference>
<dbReference type="Gene3D" id="3.40.50.300">
    <property type="entry name" value="P-loop containing nucleotide triphosphate hydrolases"/>
    <property type="match status" value="1"/>
</dbReference>
<dbReference type="InterPro" id="IPR011006">
    <property type="entry name" value="CheY-like_superfamily"/>
</dbReference>
<dbReference type="InterPro" id="IPR009057">
    <property type="entry name" value="Homeodomain-like_sf"/>
</dbReference>
<dbReference type="InterPro" id="IPR002197">
    <property type="entry name" value="HTH_Fis"/>
</dbReference>
<dbReference type="InterPro" id="IPR027417">
    <property type="entry name" value="P-loop_NTPase"/>
</dbReference>
<dbReference type="InterPro" id="IPR001789">
    <property type="entry name" value="Sig_transdc_resp-reg_receiver"/>
</dbReference>
<dbReference type="InterPro" id="IPR002078">
    <property type="entry name" value="Sigma_54_int"/>
</dbReference>
<dbReference type="InterPro" id="IPR025944">
    <property type="entry name" value="Sigma_54_int_dom_CS"/>
</dbReference>
<dbReference type="NCBIfam" id="NF047793">
    <property type="entry name" value="ResRegPgtA"/>
    <property type="match status" value="1"/>
</dbReference>
<dbReference type="PANTHER" id="PTHR32071:SF29">
    <property type="entry name" value="PHOSPHOGLYCERATE TRANSPORT SYSTEM TRANSCRIPTIONAL REGULATORY PROTEIN PGTA"/>
    <property type="match status" value="1"/>
</dbReference>
<dbReference type="PANTHER" id="PTHR32071">
    <property type="entry name" value="TRANSCRIPTIONAL REGULATORY PROTEIN"/>
    <property type="match status" value="1"/>
</dbReference>
<dbReference type="Pfam" id="PF02954">
    <property type="entry name" value="HTH_8"/>
    <property type="match status" value="1"/>
</dbReference>
<dbReference type="Pfam" id="PF00072">
    <property type="entry name" value="Response_reg"/>
    <property type="match status" value="1"/>
</dbReference>
<dbReference type="Pfam" id="PF14532">
    <property type="entry name" value="Sigma54_activ_2"/>
    <property type="match status" value="1"/>
</dbReference>
<dbReference type="SMART" id="SM00448">
    <property type="entry name" value="REC"/>
    <property type="match status" value="1"/>
</dbReference>
<dbReference type="SUPFAM" id="SSF52172">
    <property type="entry name" value="CheY-like"/>
    <property type="match status" value="1"/>
</dbReference>
<dbReference type="SUPFAM" id="SSF46689">
    <property type="entry name" value="Homeodomain-like"/>
    <property type="match status" value="1"/>
</dbReference>
<dbReference type="SUPFAM" id="SSF52540">
    <property type="entry name" value="P-loop containing nucleoside triphosphate hydrolases"/>
    <property type="match status" value="1"/>
</dbReference>
<dbReference type="PROSITE" id="PS50110">
    <property type="entry name" value="RESPONSE_REGULATORY"/>
    <property type="match status" value="1"/>
</dbReference>
<dbReference type="PROSITE" id="PS00688">
    <property type="entry name" value="SIGMA54_INTERACT_3"/>
    <property type="match status" value="1"/>
</dbReference>
<dbReference type="PROSITE" id="PS50045">
    <property type="entry name" value="SIGMA54_INTERACT_4"/>
    <property type="match status" value="1"/>
</dbReference>
<feature type="chain" id="PRO_0000081185" description="Phosphoglycerate transport system transcriptional regulatory protein PgtA">
    <location>
        <begin position="1"/>
        <end position="415"/>
    </location>
</feature>
<feature type="domain" description="Response regulatory" evidence="2">
    <location>
        <begin position="7"/>
        <end position="121"/>
    </location>
</feature>
<feature type="domain" description="Sigma-54 factor interaction" evidence="3">
    <location>
        <begin position="142"/>
        <end position="341"/>
    </location>
</feature>
<feature type="DNA-binding region" description="H-T-H motif" evidence="1">
    <location>
        <begin position="385"/>
        <end position="404"/>
    </location>
</feature>
<feature type="binding site" evidence="3">
    <location>
        <begin position="170"/>
        <end position="177"/>
    </location>
    <ligand>
        <name>ATP</name>
        <dbReference type="ChEBI" id="CHEBI:30616"/>
    </ligand>
</feature>
<feature type="modified residue" description="4-aspartylphosphate" evidence="2">
    <location>
        <position position="56"/>
    </location>
</feature>
<feature type="sequence conflict" description="In Ref. 1; AAA27184." evidence="4" ref="1">
    <original>VDPG</original>
    <variation>SIRA</variation>
    <location>
        <begin position="108"/>
        <end position="111"/>
    </location>
</feature>
<feature type="sequence conflict" description="In Ref. 1; AAA27184." evidence="4" ref="1">
    <original>Y</original>
    <variation>D</variation>
    <location>
        <position position="406"/>
    </location>
</feature>
<organism>
    <name type="scientific">Salmonella typhimurium (strain LT2 / SGSC1412 / ATCC 700720)</name>
    <dbReference type="NCBI Taxonomy" id="99287"/>
    <lineage>
        <taxon>Bacteria</taxon>
        <taxon>Pseudomonadati</taxon>
        <taxon>Pseudomonadota</taxon>
        <taxon>Gammaproteobacteria</taxon>
        <taxon>Enterobacterales</taxon>
        <taxon>Enterobacteriaceae</taxon>
        <taxon>Salmonella</taxon>
    </lineage>
</organism>